<sequence length="309" mass="34400">MELQFLGTGAGQPAKQRNVSSLALKLLDEINEVWMFDCGEGTQRQILETTIKPRKIRKIFITHLHGDHIFGLPGFLSSRSFQASEEQTDLDIYGPIGIKTYVLTSLKVSGARVPYQIHFHEFDDKSLGKIMETDKFVVYAERLAHTIFCMGYRVVQKDLEGTLDAEALKAAGVPFGPLFGKIKNGQDVELEDGRLICAKDYISAPKKGKIITIIGDTRKTSASVKLAKDADVLVHESTYGKGDERIARNHGHSTNMQAAQIAHEAGAKRLLLNHVSARFLGRDCRQMEKDAATIFENVKMVQDLEEVII</sequence>
<feature type="chain" id="PRO_1000070337" description="Ribonuclease Z">
    <location>
        <begin position="1"/>
        <end position="309"/>
    </location>
</feature>
<feature type="active site" description="Proton acceptor" evidence="1">
    <location>
        <position position="67"/>
    </location>
</feature>
<feature type="binding site" evidence="1">
    <location>
        <position position="63"/>
    </location>
    <ligand>
        <name>Zn(2+)</name>
        <dbReference type="ChEBI" id="CHEBI:29105"/>
        <label>1</label>
        <note>catalytic</note>
    </ligand>
</feature>
<feature type="binding site" evidence="1">
    <location>
        <position position="65"/>
    </location>
    <ligand>
        <name>Zn(2+)</name>
        <dbReference type="ChEBI" id="CHEBI:29105"/>
        <label>1</label>
        <note>catalytic</note>
    </ligand>
</feature>
<feature type="binding site" evidence="1">
    <location>
        <position position="67"/>
    </location>
    <ligand>
        <name>Zn(2+)</name>
        <dbReference type="ChEBI" id="CHEBI:29105"/>
        <label>2</label>
        <note>catalytic</note>
    </ligand>
</feature>
<feature type="binding site" evidence="1">
    <location>
        <position position="68"/>
    </location>
    <ligand>
        <name>Zn(2+)</name>
        <dbReference type="ChEBI" id="CHEBI:29105"/>
        <label>2</label>
        <note>catalytic</note>
    </ligand>
</feature>
<feature type="binding site" evidence="1">
    <location>
        <position position="145"/>
    </location>
    <ligand>
        <name>Zn(2+)</name>
        <dbReference type="ChEBI" id="CHEBI:29105"/>
        <label>1</label>
        <note>catalytic</note>
    </ligand>
</feature>
<feature type="binding site" evidence="1">
    <location>
        <position position="216"/>
    </location>
    <ligand>
        <name>Zn(2+)</name>
        <dbReference type="ChEBI" id="CHEBI:29105"/>
        <label>1</label>
        <note>catalytic</note>
    </ligand>
</feature>
<feature type="binding site" evidence="1">
    <location>
        <position position="216"/>
    </location>
    <ligand>
        <name>Zn(2+)</name>
        <dbReference type="ChEBI" id="CHEBI:29105"/>
        <label>2</label>
        <note>catalytic</note>
    </ligand>
</feature>
<feature type="binding site" evidence="1">
    <location>
        <position position="274"/>
    </location>
    <ligand>
        <name>Zn(2+)</name>
        <dbReference type="ChEBI" id="CHEBI:29105"/>
        <label>2</label>
        <note>catalytic</note>
    </ligand>
</feature>
<protein>
    <recommendedName>
        <fullName evidence="1">Ribonuclease Z</fullName>
        <shortName evidence="1">RNase Z</shortName>
        <ecNumber evidence="1">3.1.26.11</ecNumber>
    </recommendedName>
    <alternativeName>
        <fullName evidence="1">tRNA 3 endonuclease</fullName>
    </alternativeName>
    <alternativeName>
        <fullName evidence="1">tRNase Z</fullName>
    </alternativeName>
</protein>
<reference key="1">
    <citation type="journal article" date="2006" name="Proc. Natl. Acad. Sci. U.S.A.">
        <title>Molecular genetic anatomy of inter- and intraserotype variation in the human bacterial pathogen group A Streptococcus.</title>
        <authorList>
            <person name="Beres S.B."/>
            <person name="Richter E.W."/>
            <person name="Nagiec M.J."/>
            <person name="Sumby P."/>
            <person name="Porcella S.F."/>
            <person name="DeLeo F.R."/>
            <person name="Musser J.M."/>
        </authorList>
    </citation>
    <scope>NUCLEOTIDE SEQUENCE [LARGE SCALE GENOMIC DNA]</scope>
    <source>
        <strain>MGAS10270</strain>
    </source>
</reference>
<organism>
    <name type="scientific">Streptococcus pyogenes serotype M2 (strain MGAS10270)</name>
    <dbReference type="NCBI Taxonomy" id="370552"/>
    <lineage>
        <taxon>Bacteria</taxon>
        <taxon>Bacillati</taxon>
        <taxon>Bacillota</taxon>
        <taxon>Bacilli</taxon>
        <taxon>Lactobacillales</taxon>
        <taxon>Streptococcaceae</taxon>
        <taxon>Streptococcus</taxon>
    </lineage>
</organism>
<accession>Q1JH87</accession>
<evidence type="ECO:0000255" key="1">
    <source>
        <dbReference type="HAMAP-Rule" id="MF_01818"/>
    </source>
</evidence>
<keyword id="KW-0255">Endonuclease</keyword>
<keyword id="KW-0378">Hydrolase</keyword>
<keyword id="KW-0479">Metal-binding</keyword>
<keyword id="KW-0540">Nuclease</keyword>
<keyword id="KW-0819">tRNA processing</keyword>
<keyword id="KW-0862">Zinc</keyword>
<proteinExistence type="inferred from homology"/>
<comment type="function">
    <text evidence="1">Zinc phosphodiesterase, which displays some tRNA 3'-processing endonuclease activity. Probably involved in tRNA maturation, by removing a 3'-trailer from precursor tRNA.</text>
</comment>
<comment type="catalytic activity">
    <reaction evidence="1">
        <text>Endonucleolytic cleavage of RNA, removing extra 3' nucleotides from tRNA precursor, generating 3' termini of tRNAs. A 3'-hydroxy group is left at the tRNA terminus and a 5'-phosphoryl group is left at the trailer molecule.</text>
        <dbReference type="EC" id="3.1.26.11"/>
    </reaction>
</comment>
<comment type="cofactor">
    <cofactor evidence="1">
        <name>Zn(2+)</name>
        <dbReference type="ChEBI" id="CHEBI:29105"/>
    </cofactor>
    <text evidence="1">Binds 2 Zn(2+) ions.</text>
</comment>
<comment type="subunit">
    <text evidence="1">Homodimer.</text>
</comment>
<comment type="similarity">
    <text evidence="1">Belongs to the RNase Z family.</text>
</comment>
<name>RNZ_STRPD</name>
<dbReference type="EC" id="3.1.26.11" evidence="1"/>
<dbReference type="EMBL" id="CP000260">
    <property type="protein sequence ID" value="ABF33849.1"/>
    <property type="molecule type" value="Genomic_DNA"/>
</dbReference>
<dbReference type="RefSeq" id="WP_009881223.1">
    <property type="nucleotide sequence ID" value="NZ_CVUH01000002.1"/>
</dbReference>
<dbReference type="SMR" id="Q1JH87"/>
<dbReference type="GeneID" id="69900974"/>
<dbReference type="KEGG" id="sph:MGAS10270_Spy0784"/>
<dbReference type="HOGENOM" id="CLU_031317_2_0_9"/>
<dbReference type="Proteomes" id="UP000002436">
    <property type="component" value="Chromosome"/>
</dbReference>
<dbReference type="GO" id="GO:0042781">
    <property type="term" value="F:3'-tRNA processing endoribonuclease activity"/>
    <property type="evidence" value="ECO:0007669"/>
    <property type="project" value="UniProtKB-UniRule"/>
</dbReference>
<dbReference type="GO" id="GO:0008270">
    <property type="term" value="F:zinc ion binding"/>
    <property type="evidence" value="ECO:0007669"/>
    <property type="project" value="UniProtKB-UniRule"/>
</dbReference>
<dbReference type="CDD" id="cd07717">
    <property type="entry name" value="RNaseZ_ZiPD-like_MBL-fold"/>
    <property type="match status" value="1"/>
</dbReference>
<dbReference type="FunFam" id="3.60.15.10:FF:000002">
    <property type="entry name" value="Ribonuclease Z"/>
    <property type="match status" value="1"/>
</dbReference>
<dbReference type="Gene3D" id="3.60.15.10">
    <property type="entry name" value="Ribonuclease Z/Hydroxyacylglutathione hydrolase-like"/>
    <property type="match status" value="1"/>
</dbReference>
<dbReference type="HAMAP" id="MF_01818">
    <property type="entry name" value="RNase_Z_BN"/>
    <property type="match status" value="1"/>
</dbReference>
<dbReference type="InterPro" id="IPR001279">
    <property type="entry name" value="Metallo-B-lactamas"/>
</dbReference>
<dbReference type="InterPro" id="IPR036866">
    <property type="entry name" value="RibonucZ/Hydroxyglut_hydro"/>
</dbReference>
<dbReference type="InterPro" id="IPR013471">
    <property type="entry name" value="RNase_Z/BN"/>
</dbReference>
<dbReference type="NCBIfam" id="NF000801">
    <property type="entry name" value="PRK00055.1-3"/>
    <property type="match status" value="1"/>
</dbReference>
<dbReference type="NCBIfam" id="TIGR02651">
    <property type="entry name" value="RNase_Z"/>
    <property type="match status" value="1"/>
</dbReference>
<dbReference type="PANTHER" id="PTHR46018">
    <property type="entry name" value="ZINC PHOSPHODIESTERASE ELAC PROTEIN 1"/>
    <property type="match status" value="1"/>
</dbReference>
<dbReference type="PANTHER" id="PTHR46018:SF2">
    <property type="entry name" value="ZINC PHOSPHODIESTERASE ELAC PROTEIN 1"/>
    <property type="match status" value="1"/>
</dbReference>
<dbReference type="Pfam" id="PF00753">
    <property type="entry name" value="Lactamase_B"/>
    <property type="match status" value="1"/>
</dbReference>
<dbReference type="SUPFAM" id="SSF56281">
    <property type="entry name" value="Metallo-hydrolase/oxidoreductase"/>
    <property type="match status" value="1"/>
</dbReference>
<gene>
    <name evidence="1" type="primary">rnz</name>
    <name type="ordered locus">MGAS10270_Spy0784</name>
</gene>